<accession>Q5W9D6</accession>
<reference key="1">
    <citation type="journal article" date="2005" name="DNA Seq.">
        <title>Nucleotide sequence of complementary DNA encoding for quaking protein of cow, horse and pig.</title>
        <authorList>
            <person name="Murata T."/>
            <person name="Yamashiro Y."/>
            <person name="Kondo T."/>
            <person name="Nakaichi M."/>
            <person name="Une S."/>
            <person name="Taura Y."/>
        </authorList>
    </citation>
    <scope>NUCLEOTIDE SEQUENCE [MRNA]</scope>
</reference>
<sequence>MVGEMETKEKPKPTPDYLMQLMNDKKLMSSLPNFCGIFNHLERLLDEEISRVRKDMYNDTLNGSTEKRSAELPDAVGPIVQLQEKLYVPVKEYPDFNFVGRILGPRGLTAKQLEAETGCKIMVRGKGSMRDKKKEEQNRGKPNWEHLNEDLHVLITVEDAQNRAEIKLKRAVEEVKKLLVPAAEGEDSLKKMQLMELAILNGTYRDANIKSPALAFSLAATAQAAPRIITGPAPVLPPAALRTPTPAGPTIMPLIRQIQTAVMPNGTPHPTAAIVPPGPEAGLIYTPYEYPYTLAPATSILEYPIEPSGVLGAVATKVRRHDMRVHPYQRIVTADRAATGN</sequence>
<proteinExistence type="evidence at transcript level"/>
<dbReference type="EMBL" id="AB177987">
    <property type="protein sequence ID" value="BAD67434.1"/>
    <property type="molecule type" value="mRNA"/>
</dbReference>
<dbReference type="RefSeq" id="NP_001075300.1">
    <property type="nucleotide sequence ID" value="NM_001081831.1"/>
</dbReference>
<dbReference type="BMRB" id="Q5W9D6"/>
<dbReference type="SMR" id="Q5W9D6"/>
<dbReference type="FunCoup" id="Q5W9D6">
    <property type="interactions" value="2114"/>
</dbReference>
<dbReference type="STRING" id="9796.ENSECAP00000052499"/>
<dbReference type="PaxDb" id="9796-ENSECAP00000052499"/>
<dbReference type="GeneID" id="100033866"/>
<dbReference type="KEGG" id="ecb:100033866"/>
<dbReference type="CTD" id="9444"/>
<dbReference type="InParanoid" id="Q5W9D6"/>
<dbReference type="OMA" id="WICAEIS"/>
<dbReference type="OrthoDB" id="6777263at2759"/>
<dbReference type="Proteomes" id="UP000002281">
    <property type="component" value="Chromosome 31"/>
</dbReference>
<dbReference type="Bgee" id="ENSECAG00000017504">
    <property type="expression patterns" value="Expressed in brainstem and 23 other cell types or tissues"/>
</dbReference>
<dbReference type="ExpressionAtlas" id="Q5W9D6">
    <property type="expression patterns" value="baseline"/>
</dbReference>
<dbReference type="GO" id="GO:0005737">
    <property type="term" value="C:cytoplasm"/>
    <property type="evidence" value="ECO:0007669"/>
    <property type="project" value="UniProtKB-SubCell"/>
</dbReference>
<dbReference type="GO" id="GO:0005634">
    <property type="term" value="C:nucleus"/>
    <property type="evidence" value="ECO:0000318"/>
    <property type="project" value="GO_Central"/>
</dbReference>
<dbReference type="GO" id="GO:0003677">
    <property type="term" value="F:DNA binding"/>
    <property type="evidence" value="ECO:0007669"/>
    <property type="project" value="UniProtKB-KW"/>
</dbReference>
<dbReference type="GO" id="GO:0035198">
    <property type="term" value="F:miRNA binding"/>
    <property type="evidence" value="ECO:0000250"/>
    <property type="project" value="UniProtKB"/>
</dbReference>
<dbReference type="GO" id="GO:0003729">
    <property type="term" value="F:mRNA binding"/>
    <property type="evidence" value="ECO:0000318"/>
    <property type="project" value="GO_Central"/>
</dbReference>
<dbReference type="GO" id="GO:0017124">
    <property type="term" value="F:SH3 domain binding"/>
    <property type="evidence" value="ECO:0007669"/>
    <property type="project" value="UniProtKB-KW"/>
</dbReference>
<dbReference type="GO" id="GO:0014004">
    <property type="term" value="P:microglia differentiation"/>
    <property type="evidence" value="ECO:0000250"/>
    <property type="project" value="UniProtKB"/>
</dbReference>
<dbReference type="GO" id="GO:0051028">
    <property type="term" value="P:mRNA transport"/>
    <property type="evidence" value="ECO:0007669"/>
    <property type="project" value="UniProtKB-KW"/>
</dbReference>
<dbReference type="GO" id="GO:1905869">
    <property type="term" value="P:negative regulation of 3'-UTR-mediated mRNA stabilization"/>
    <property type="evidence" value="ECO:0000250"/>
    <property type="project" value="UniProtKB"/>
</dbReference>
<dbReference type="GO" id="GO:0120163">
    <property type="term" value="P:negative regulation of cold-induced thermogenesis"/>
    <property type="evidence" value="ECO:0000250"/>
    <property type="project" value="UniProtKB"/>
</dbReference>
<dbReference type="GO" id="GO:0045650">
    <property type="term" value="P:negative regulation of macrophage differentiation"/>
    <property type="evidence" value="ECO:0000250"/>
    <property type="project" value="UniProtKB"/>
</dbReference>
<dbReference type="GO" id="GO:2000626">
    <property type="term" value="P:negative regulation of miRNA catabolic process"/>
    <property type="evidence" value="ECO:0000250"/>
    <property type="project" value="UniProtKB"/>
</dbReference>
<dbReference type="GO" id="GO:0017148">
    <property type="term" value="P:negative regulation of translation"/>
    <property type="evidence" value="ECO:0000250"/>
    <property type="project" value="UniProtKB"/>
</dbReference>
<dbReference type="GO" id="GO:0048710">
    <property type="term" value="P:regulation of astrocyte differentiation"/>
    <property type="evidence" value="ECO:0000250"/>
    <property type="project" value="UniProtKB"/>
</dbReference>
<dbReference type="GO" id="GO:0010717">
    <property type="term" value="P:regulation of epithelial to mesenchymal transition"/>
    <property type="evidence" value="ECO:0000250"/>
    <property type="project" value="UniProtKB"/>
</dbReference>
<dbReference type="GO" id="GO:0048024">
    <property type="term" value="P:regulation of mRNA splicing, via spliceosome"/>
    <property type="evidence" value="ECO:0000250"/>
    <property type="project" value="UniProtKB"/>
</dbReference>
<dbReference type="GO" id="GO:0160091">
    <property type="term" value="P:spliceosome-depend formation of circular RNA"/>
    <property type="evidence" value="ECO:0000250"/>
    <property type="project" value="UniProtKB"/>
</dbReference>
<dbReference type="GO" id="GO:0035886">
    <property type="term" value="P:vascular associated smooth muscle cell differentiation"/>
    <property type="evidence" value="ECO:0000250"/>
    <property type="project" value="UniProtKB"/>
</dbReference>
<dbReference type="CDD" id="cd22465">
    <property type="entry name" value="KH-I_Hqk"/>
    <property type="match status" value="1"/>
</dbReference>
<dbReference type="FunFam" id="1.20.5.4010:FF:000001">
    <property type="entry name" value="protein quaking isoform X1"/>
    <property type="match status" value="1"/>
</dbReference>
<dbReference type="FunFam" id="3.30.1370.10:FF:000055">
    <property type="entry name" value="protein quaking isoform X1"/>
    <property type="match status" value="1"/>
</dbReference>
<dbReference type="Gene3D" id="1.20.5.4010">
    <property type="match status" value="1"/>
</dbReference>
<dbReference type="Gene3D" id="3.30.1370.10">
    <property type="entry name" value="K Homology domain, type 1"/>
    <property type="match status" value="1"/>
</dbReference>
<dbReference type="InterPro" id="IPR045071">
    <property type="entry name" value="BBP-like"/>
</dbReference>
<dbReference type="InterPro" id="IPR055256">
    <property type="entry name" value="KH_1_KHDC4/BBP-like"/>
</dbReference>
<dbReference type="InterPro" id="IPR004087">
    <property type="entry name" value="KH_dom"/>
</dbReference>
<dbReference type="InterPro" id="IPR036612">
    <property type="entry name" value="KH_dom_type_1_sf"/>
</dbReference>
<dbReference type="InterPro" id="IPR032367">
    <property type="entry name" value="Quaking_NLS"/>
</dbReference>
<dbReference type="InterPro" id="IPR032377">
    <property type="entry name" value="STAR_dimer"/>
</dbReference>
<dbReference type="PANTHER" id="PTHR11208:SF125">
    <property type="entry name" value="KH DOMAIN-CONTAINING RNA-BINDING PROTEIN QKI"/>
    <property type="match status" value="1"/>
</dbReference>
<dbReference type="PANTHER" id="PTHR11208">
    <property type="entry name" value="RNA-BINDING PROTEIN RELATED"/>
    <property type="match status" value="1"/>
</dbReference>
<dbReference type="Pfam" id="PF22675">
    <property type="entry name" value="KH-I_KHDC4-BBP"/>
    <property type="match status" value="1"/>
</dbReference>
<dbReference type="Pfam" id="PF16551">
    <property type="entry name" value="Quaking_NLS"/>
    <property type="match status" value="1"/>
</dbReference>
<dbReference type="Pfam" id="PF16544">
    <property type="entry name" value="STAR_dimer"/>
    <property type="match status" value="1"/>
</dbReference>
<dbReference type="SMART" id="SM00322">
    <property type="entry name" value="KH"/>
    <property type="match status" value="1"/>
</dbReference>
<dbReference type="SUPFAM" id="SSF54791">
    <property type="entry name" value="Eukaryotic type KH-domain (KH-domain type I)"/>
    <property type="match status" value="1"/>
</dbReference>
<keyword id="KW-0963">Cytoplasm</keyword>
<keyword id="KW-0217">Developmental protein</keyword>
<keyword id="KW-0221">Differentiation</keyword>
<keyword id="KW-0238">DNA-binding</keyword>
<keyword id="KW-0488">Methylation</keyword>
<keyword id="KW-0507">mRNA processing</keyword>
<keyword id="KW-0508">mRNA splicing</keyword>
<keyword id="KW-0509">mRNA transport</keyword>
<keyword id="KW-0539">Nucleus</keyword>
<keyword id="KW-0597">Phosphoprotein</keyword>
<keyword id="KW-1185">Reference proteome</keyword>
<keyword id="KW-0694">RNA-binding</keyword>
<keyword id="KW-0729">SH3-binding</keyword>
<keyword id="KW-0810">Translation regulation</keyword>
<keyword id="KW-0813">Transport</keyword>
<keyword id="KW-0832">Ubl conjugation</keyword>
<comment type="function">
    <text evidence="2 3">RNA reader protein, which recognizes and binds specific RNAs, thereby regulating RNA metabolic processes, such as pre-mRNA splicing, circular RNA (circRNA) formation, mRNA export, mRNA stability and/or translation. Involved in various cellular processes, such as mRNA storage into stress granules, apoptosis, lipid deposition, interferon response, glial cell fate and development. Binds to the 5'-NACUAAY-N(1,20)-UAAY-3' RNA core sequence. Acts as a mRNA modification reader that specifically recognizes and binds mRNA transcripts modified by internal N(7)-methylguanine (m7G). Promotes the formation of circular RNAs (circRNAs) during the epithelial to mesenchymal transition and in cardiomyocytes: acts by binding to sites flanking circRNA-forming exons. CircRNAs are produced by back-splicing circularization of pre-mRNAs. Plays a central role in myelinization via 3 distinct mechanisms (By similarity). First, acts by protecting and promoting stability of target mRNAs such as MBP, SIRT2 and CDKN1B, which promotes oligodendrocyte differentiation. Second, participates in mRNA transport by regulating the nuclear export of MBP mRNA. Finally, indirectly regulates mRNA splicing of MAG pre-mRNA during oligodendrocyte differentiation by acting as a negative regulator of MAG exon 12 alternative splicing: acts by binding to HNRNPA1 mRNA splicing factor, preventing its translation. Involved in microglia differentiation and remyelination by regulating microexon alternative splicing of the Rho GTPase pathway (By similarity). Involved in macrophage differentiation: promotes monocyte differentiation by regulating pre-mRNA splicing in naive peripheral blood monocytes (By similarity). Acts as an important regulator of muscle development: required for the contractile function of cardiomyocytes by regulating alternative splicing of cardiomyocyte transcripts. Acts as a negative regulator of thermogenesis by decreasing stability, nuclear export and translation of mRNAs encoding PPARGC1A and UCP1. Also required for visceral endoderm function and blood vessel development (By similarity). May also play a role in smooth muscle development (By similarity). In addition to its RNA-binding activity, also acts as a nuclear transcription coactivator for SREBF2/SREBP2 (By similarity).</text>
</comment>
<comment type="subunit">
    <text evidence="2 3">Homodimer; does not require RNA to homodimerize (By similarity). Able to heterodimerize with BICC1 (By similarity).</text>
</comment>
<comment type="subcellular location">
    <subcellularLocation>
        <location evidence="2">Nucleus</location>
    </subcellularLocation>
    <subcellularLocation>
        <location evidence="2">Cytoplasm</location>
    </subcellularLocation>
</comment>
<comment type="domain">
    <text evidence="2">The KH domain and the Qua2 region are involved in RNA binding.</text>
</comment>
<comment type="PTM">
    <text evidence="3">Methylated by PRMT1.</text>
</comment>
<comment type="PTM">
    <text evidence="3">Tyrosine phosphorylated at its C-terminus, probably by FYN. Phosphorylation leads to decreased mRNA-binding affinity, affecting transport and/or stabilization of MBP mRNA (By similarity).</text>
</comment>
<comment type="PTM">
    <text evidence="3">Ubiquitinated by RNF6 in macrophages, leading to its degradation.</text>
</comment>
<comment type="similarity">
    <text evidence="4">Belongs to the quaking family.</text>
</comment>
<evidence type="ECO:0000250" key="1">
    <source>
        <dbReference type="UniProtKB" id="Q17339"/>
    </source>
</evidence>
<evidence type="ECO:0000250" key="2">
    <source>
        <dbReference type="UniProtKB" id="Q96PU8"/>
    </source>
</evidence>
<evidence type="ECO:0000250" key="3">
    <source>
        <dbReference type="UniProtKB" id="Q9QYS9"/>
    </source>
</evidence>
<evidence type="ECO:0000305" key="4"/>
<feature type="chain" id="PRO_0000239372" description="KH domain-containing RNA-binding protein QKI">
    <location>
        <begin position="1"/>
        <end position="341"/>
    </location>
</feature>
<feature type="domain" description="KH">
    <location>
        <begin position="87"/>
        <end position="153"/>
    </location>
</feature>
<feature type="region of interest" description="Qua1 domain; involved in homodimerization" evidence="1">
    <location>
        <begin position="11"/>
        <end position="82"/>
    </location>
</feature>
<feature type="region of interest" description="Qua2 domain; involved in RNA binding" evidence="2">
    <location>
        <begin position="182"/>
        <end position="213"/>
    </location>
</feature>
<feature type="short sequence motif" description="SH3-binding">
    <location>
        <begin position="276"/>
        <end position="279"/>
    </location>
</feature>
<feature type="short sequence motif" description="Nuclear localization signal" evidence="3">
    <location>
        <begin position="324"/>
        <end position="330"/>
    </location>
</feature>
<feature type="site" description="Involved in RNA binding" evidence="2">
    <location>
        <position position="97"/>
    </location>
</feature>
<feature type="site" description="Involved in RNA binding" evidence="2">
    <location>
        <position position="120"/>
    </location>
</feature>
<feature type="site" description="Involved in RNA binding" evidence="2">
    <location>
        <position position="124"/>
    </location>
</feature>
<feature type="site" description="Involved in RNA binding" evidence="2">
    <location>
        <position position="130"/>
    </location>
</feature>
<feature type="site" description="Involved in RNA binding" evidence="2">
    <location>
        <position position="190"/>
    </location>
</feature>
<feature type="site" description="Involved in RNA binding" evidence="2">
    <location>
        <position position="193"/>
    </location>
</feature>
<feature type="modified residue" description="Phosphoserine" evidence="2">
    <location>
        <position position="188"/>
    </location>
</feature>
<feature type="modified residue" description="Omega-N-methylarginine" evidence="2">
    <location>
        <position position="227"/>
    </location>
</feature>
<feature type="modified residue" description="Asymmetric dimethylarginine; by CARM1; alternate" evidence="2">
    <location>
        <position position="242"/>
    </location>
</feature>
<feature type="modified residue" description="Omega-N-methylarginine; alternate" evidence="2">
    <location>
        <position position="242"/>
    </location>
</feature>
<feature type="modified residue" description="Omega-N-methylarginine" evidence="3">
    <location>
        <position position="256"/>
    </location>
</feature>
<name>QKI_HORSE</name>
<organism>
    <name type="scientific">Equus caballus</name>
    <name type="common">Horse</name>
    <dbReference type="NCBI Taxonomy" id="9796"/>
    <lineage>
        <taxon>Eukaryota</taxon>
        <taxon>Metazoa</taxon>
        <taxon>Chordata</taxon>
        <taxon>Craniata</taxon>
        <taxon>Vertebrata</taxon>
        <taxon>Euteleostomi</taxon>
        <taxon>Mammalia</taxon>
        <taxon>Eutheria</taxon>
        <taxon>Laurasiatheria</taxon>
        <taxon>Perissodactyla</taxon>
        <taxon>Equidae</taxon>
        <taxon>Equus</taxon>
    </lineage>
</organism>
<gene>
    <name evidence="3" type="primary">QKI</name>
</gene>
<protein>
    <recommendedName>
        <fullName evidence="3">KH domain-containing RNA-binding protein QKI</fullName>
    </recommendedName>
    <alternativeName>
        <fullName evidence="3">Protein quaking</fullName>
        <shortName evidence="4">EqkI</shortName>
    </alternativeName>
</protein>